<feature type="chain" id="PRO_0000343150" description="WW domain-containing protein C660.05">
    <location>
        <begin position="1"/>
        <end position="143"/>
    </location>
</feature>
<feature type="domain" description="WW">
    <location>
        <begin position="9"/>
        <end position="44"/>
    </location>
</feature>
<feature type="region of interest" description="Disordered" evidence="1">
    <location>
        <begin position="115"/>
        <end position="143"/>
    </location>
</feature>
<proteinExistence type="predicted"/>
<gene>
    <name type="ORF">SPBC660.05</name>
</gene>
<reference key="1">
    <citation type="journal article" date="2002" name="Nature">
        <title>The genome sequence of Schizosaccharomyces pombe.</title>
        <authorList>
            <person name="Wood V."/>
            <person name="Gwilliam R."/>
            <person name="Rajandream M.A."/>
            <person name="Lyne M.H."/>
            <person name="Lyne R."/>
            <person name="Stewart A."/>
            <person name="Sgouros J.G."/>
            <person name="Peat N."/>
            <person name="Hayles J."/>
            <person name="Baker S.G."/>
            <person name="Basham D."/>
            <person name="Bowman S."/>
            <person name="Brooks K."/>
            <person name="Brown D."/>
            <person name="Brown S."/>
            <person name="Chillingworth T."/>
            <person name="Churcher C.M."/>
            <person name="Collins M."/>
            <person name="Connor R."/>
            <person name="Cronin A."/>
            <person name="Davis P."/>
            <person name="Feltwell T."/>
            <person name="Fraser A."/>
            <person name="Gentles S."/>
            <person name="Goble A."/>
            <person name="Hamlin N."/>
            <person name="Harris D.E."/>
            <person name="Hidalgo J."/>
            <person name="Hodgson G."/>
            <person name="Holroyd S."/>
            <person name="Hornsby T."/>
            <person name="Howarth S."/>
            <person name="Huckle E.J."/>
            <person name="Hunt S."/>
            <person name="Jagels K."/>
            <person name="James K.D."/>
            <person name="Jones L."/>
            <person name="Jones M."/>
            <person name="Leather S."/>
            <person name="McDonald S."/>
            <person name="McLean J."/>
            <person name="Mooney P."/>
            <person name="Moule S."/>
            <person name="Mungall K.L."/>
            <person name="Murphy L.D."/>
            <person name="Niblett D."/>
            <person name="Odell C."/>
            <person name="Oliver K."/>
            <person name="O'Neil S."/>
            <person name="Pearson D."/>
            <person name="Quail M.A."/>
            <person name="Rabbinowitsch E."/>
            <person name="Rutherford K.M."/>
            <person name="Rutter S."/>
            <person name="Saunders D."/>
            <person name="Seeger K."/>
            <person name="Sharp S."/>
            <person name="Skelton J."/>
            <person name="Simmonds M.N."/>
            <person name="Squares R."/>
            <person name="Squares S."/>
            <person name="Stevens K."/>
            <person name="Taylor K."/>
            <person name="Taylor R.G."/>
            <person name="Tivey A."/>
            <person name="Walsh S.V."/>
            <person name="Warren T."/>
            <person name="Whitehead S."/>
            <person name="Woodward J.R."/>
            <person name="Volckaert G."/>
            <person name="Aert R."/>
            <person name="Robben J."/>
            <person name="Grymonprez B."/>
            <person name="Weltjens I."/>
            <person name="Vanstreels E."/>
            <person name="Rieger M."/>
            <person name="Schaefer M."/>
            <person name="Mueller-Auer S."/>
            <person name="Gabel C."/>
            <person name="Fuchs M."/>
            <person name="Duesterhoeft A."/>
            <person name="Fritzc C."/>
            <person name="Holzer E."/>
            <person name="Moestl D."/>
            <person name="Hilbert H."/>
            <person name="Borzym K."/>
            <person name="Langer I."/>
            <person name="Beck A."/>
            <person name="Lehrach H."/>
            <person name="Reinhardt R."/>
            <person name="Pohl T.M."/>
            <person name="Eger P."/>
            <person name="Zimmermann W."/>
            <person name="Wedler H."/>
            <person name="Wambutt R."/>
            <person name="Purnelle B."/>
            <person name="Goffeau A."/>
            <person name="Cadieu E."/>
            <person name="Dreano S."/>
            <person name="Gloux S."/>
            <person name="Lelaure V."/>
            <person name="Mottier S."/>
            <person name="Galibert F."/>
            <person name="Aves S.J."/>
            <person name="Xiang Z."/>
            <person name="Hunt C."/>
            <person name="Moore K."/>
            <person name="Hurst S.M."/>
            <person name="Lucas M."/>
            <person name="Rochet M."/>
            <person name="Gaillardin C."/>
            <person name="Tallada V.A."/>
            <person name="Garzon A."/>
            <person name="Thode G."/>
            <person name="Daga R.R."/>
            <person name="Cruzado L."/>
            <person name="Jimenez J."/>
            <person name="Sanchez M."/>
            <person name="del Rey F."/>
            <person name="Benito J."/>
            <person name="Dominguez A."/>
            <person name="Revuelta J.L."/>
            <person name="Moreno S."/>
            <person name="Armstrong J."/>
            <person name="Forsburg S.L."/>
            <person name="Cerutti L."/>
            <person name="Lowe T."/>
            <person name="McCombie W.R."/>
            <person name="Paulsen I."/>
            <person name="Potashkin J."/>
            <person name="Shpakovski G.V."/>
            <person name="Ussery D."/>
            <person name="Barrell B.G."/>
            <person name="Nurse P."/>
        </authorList>
    </citation>
    <scope>NUCLEOTIDE SEQUENCE [LARGE SCALE GENOMIC DNA]</scope>
    <source>
        <strain>972 / ATCC 24843</strain>
    </source>
</reference>
<name>YHK5_SCHPO</name>
<sequence length="143" mass="15134">MSVYQTYKGLPAGWVAQWDPTYQAYFYINETFEGAQPQWEPPIPGLHIPPPPGTTTVVYQKDVPRSSDGSRSMTAGLGGFMVGALAGSVLRGHRAYYAPPPPRGPLFGPRIGGGHHGPLHGPHGGFGGRGGGRMGGRGGRGRR</sequence>
<evidence type="ECO:0000256" key="1">
    <source>
        <dbReference type="SAM" id="MobiDB-lite"/>
    </source>
</evidence>
<keyword id="KW-1185">Reference proteome</keyword>
<accession>O94425</accession>
<dbReference type="EMBL" id="CU329671">
    <property type="protein sequence ID" value="CAA22525.1"/>
    <property type="molecule type" value="Genomic_DNA"/>
</dbReference>
<dbReference type="PIR" id="T40617">
    <property type="entry name" value="T40617"/>
</dbReference>
<dbReference type="BioGRID" id="277648">
    <property type="interactions" value="59"/>
</dbReference>
<dbReference type="STRING" id="284812.O94425"/>
<dbReference type="PaxDb" id="4896-SPBC660.05.1"/>
<dbReference type="EnsemblFungi" id="SPBC660.05.1">
    <property type="protein sequence ID" value="SPBC660.05.1:pep"/>
    <property type="gene ID" value="SPBC660.05"/>
</dbReference>
<dbReference type="KEGG" id="spo:2541133"/>
<dbReference type="PomBase" id="SPBC660.05"/>
<dbReference type="VEuPathDB" id="FungiDB:SPBC660.05"/>
<dbReference type="HOGENOM" id="CLU_1807330_0_0_1"/>
<dbReference type="InParanoid" id="O94425"/>
<dbReference type="PRO" id="PR:O94425"/>
<dbReference type="Proteomes" id="UP000002485">
    <property type="component" value="Chromosome II"/>
</dbReference>
<dbReference type="GO" id="GO:0005634">
    <property type="term" value="C:nucleus"/>
    <property type="evidence" value="ECO:0000266"/>
    <property type="project" value="PomBase"/>
</dbReference>
<dbReference type="CDD" id="cd00201">
    <property type="entry name" value="WW"/>
    <property type="match status" value="1"/>
</dbReference>
<dbReference type="Gene3D" id="2.20.70.10">
    <property type="match status" value="1"/>
</dbReference>
<dbReference type="InterPro" id="IPR001202">
    <property type="entry name" value="WW_dom"/>
</dbReference>
<dbReference type="InterPro" id="IPR036020">
    <property type="entry name" value="WW_dom_sf"/>
</dbReference>
<dbReference type="SMART" id="SM00456">
    <property type="entry name" value="WW"/>
    <property type="match status" value="1"/>
</dbReference>
<dbReference type="SUPFAM" id="SSF51045">
    <property type="entry name" value="WW domain"/>
    <property type="match status" value="1"/>
</dbReference>
<protein>
    <recommendedName>
        <fullName>WW domain-containing protein C660.05</fullName>
    </recommendedName>
</protein>
<organism>
    <name type="scientific">Schizosaccharomyces pombe (strain 972 / ATCC 24843)</name>
    <name type="common">Fission yeast</name>
    <dbReference type="NCBI Taxonomy" id="284812"/>
    <lineage>
        <taxon>Eukaryota</taxon>
        <taxon>Fungi</taxon>
        <taxon>Dikarya</taxon>
        <taxon>Ascomycota</taxon>
        <taxon>Taphrinomycotina</taxon>
        <taxon>Schizosaccharomycetes</taxon>
        <taxon>Schizosaccharomycetales</taxon>
        <taxon>Schizosaccharomycetaceae</taxon>
        <taxon>Schizosaccharomyces</taxon>
    </lineage>
</organism>